<dbReference type="EC" id="5.4.3.8" evidence="1"/>
<dbReference type="EMBL" id="CP000544">
    <property type="protein sequence ID" value="ABM62775.1"/>
    <property type="molecule type" value="Genomic_DNA"/>
</dbReference>
<dbReference type="RefSeq" id="WP_011814797.1">
    <property type="nucleotide sequence ID" value="NC_008789.1"/>
</dbReference>
<dbReference type="SMR" id="A1WYL3"/>
<dbReference type="STRING" id="349124.Hhal_2011"/>
<dbReference type="KEGG" id="hha:Hhal_2011"/>
<dbReference type="eggNOG" id="COG0001">
    <property type="taxonomic scope" value="Bacteria"/>
</dbReference>
<dbReference type="HOGENOM" id="CLU_016922_1_5_6"/>
<dbReference type="OrthoDB" id="9770449at2"/>
<dbReference type="UniPathway" id="UPA00251">
    <property type="reaction ID" value="UER00317"/>
</dbReference>
<dbReference type="Proteomes" id="UP000000647">
    <property type="component" value="Chromosome"/>
</dbReference>
<dbReference type="GO" id="GO:0005737">
    <property type="term" value="C:cytoplasm"/>
    <property type="evidence" value="ECO:0007669"/>
    <property type="project" value="UniProtKB-SubCell"/>
</dbReference>
<dbReference type="GO" id="GO:0042286">
    <property type="term" value="F:glutamate-1-semialdehyde 2,1-aminomutase activity"/>
    <property type="evidence" value="ECO:0007669"/>
    <property type="project" value="UniProtKB-UniRule"/>
</dbReference>
<dbReference type="GO" id="GO:0030170">
    <property type="term" value="F:pyridoxal phosphate binding"/>
    <property type="evidence" value="ECO:0007669"/>
    <property type="project" value="InterPro"/>
</dbReference>
<dbReference type="GO" id="GO:0008483">
    <property type="term" value="F:transaminase activity"/>
    <property type="evidence" value="ECO:0007669"/>
    <property type="project" value="InterPro"/>
</dbReference>
<dbReference type="GO" id="GO:0006782">
    <property type="term" value="P:protoporphyrinogen IX biosynthetic process"/>
    <property type="evidence" value="ECO:0007669"/>
    <property type="project" value="UniProtKB-UniRule"/>
</dbReference>
<dbReference type="CDD" id="cd00610">
    <property type="entry name" value="OAT_like"/>
    <property type="match status" value="1"/>
</dbReference>
<dbReference type="FunFam" id="3.40.640.10:FF:000021">
    <property type="entry name" value="Glutamate-1-semialdehyde 2,1-aminomutase"/>
    <property type="match status" value="1"/>
</dbReference>
<dbReference type="Gene3D" id="3.90.1150.10">
    <property type="entry name" value="Aspartate Aminotransferase, domain 1"/>
    <property type="match status" value="1"/>
</dbReference>
<dbReference type="Gene3D" id="3.40.640.10">
    <property type="entry name" value="Type I PLP-dependent aspartate aminotransferase-like (Major domain)"/>
    <property type="match status" value="1"/>
</dbReference>
<dbReference type="HAMAP" id="MF_00375">
    <property type="entry name" value="HemL_aminotrans_3"/>
    <property type="match status" value="1"/>
</dbReference>
<dbReference type="InterPro" id="IPR004639">
    <property type="entry name" value="4pyrrol_synth_GluAld_NH2Trfase"/>
</dbReference>
<dbReference type="InterPro" id="IPR005814">
    <property type="entry name" value="Aminotrans_3"/>
</dbReference>
<dbReference type="InterPro" id="IPR049704">
    <property type="entry name" value="Aminotrans_3_PPA_site"/>
</dbReference>
<dbReference type="InterPro" id="IPR015424">
    <property type="entry name" value="PyrdxlP-dep_Trfase"/>
</dbReference>
<dbReference type="InterPro" id="IPR015421">
    <property type="entry name" value="PyrdxlP-dep_Trfase_major"/>
</dbReference>
<dbReference type="InterPro" id="IPR015422">
    <property type="entry name" value="PyrdxlP-dep_Trfase_small"/>
</dbReference>
<dbReference type="NCBIfam" id="TIGR00713">
    <property type="entry name" value="hemL"/>
    <property type="match status" value="1"/>
</dbReference>
<dbReference type="NCBIfam" id="NF000818">
    <property type="entry name" value="PRK00062.1"/>
    <property type="match status" value="1"/>
</dbReference>
<dbReference type="PANTHER" id="PTHR43713">
    <property type="entry name" value="GLUTAMATE-1-SEMIALDEHYDE 2,1-AMINOMUTASE"/>
    <property type="match status" value="1"/>
</dbReference>
<dbReference type="PANTHER" id="PTHR43713:SF3">
    <property type="entry name" value="GLUTAMATE-1-SEMIALDEHYDE 2,1-AMINOMUTASE 1, CHLOROPLASTIC-RELATED"/>
    <property type="match status" value="1"/>
</dbReference>
<dbReference type="Pfam" id="PF00202">
    <property type="entry name" value="Aminotran_3"/>
    <property type="match status" value="1"/>
</dbReference>
<dbReference type="SUPFAM" id="SSF53383">
    <property type="entry name" value="PLP-dependent transferases"/>
    <property type="match status" value="1"/>
</dbReference>
<dbReference type="PROSITE" id="PS00600">
    <property type="entry name" value="AA_TRANSFER_CLASS_3"/>
    <property type="match status" value="1"/>
</dbReference>
<comment type="catalytic activity">
    <reaction evidence="1">
        <text>(S)-4-amino-5-oxopentanoate = 5-aminolevulinate</text>
        <dbReference type="Rhea" id="RHEA:14265"/>
        <dbReference type="ChEBI" id="CHEBI:57501"/>
        <dbReference type="ChEBI" id="CHEBI:356416"/>
        <dbReference type="EC" id="5.4.3.8"/>
    </reaction>
</comment>
<comment type="cofactor">
    <cofactor evidence="1">
        <name>pyridoxal 5'-phosphate</name>
        <dbReference type="ChEBI" id="CHEBI:597326"/>
    </cofactor>
</comment>
<comment type="pathway">
    <text evidence="1">Porphyrin-containing compound metabolism; protoporphyrin-IX biosynthesis; 5-aminolevulinate from L-glutamyl-tRNA(Glu): step 2/2.</text>
</comment>
<comment type="subunit">
    <text evidence="1">Homodimer.</text>
</comment>
<comment type="subcellular location">
    <subcellularLocation>
        <location evidence="1">Cytoplasm</location>
    </subcellularLocation>
</comment>
<comment type="similarity">
    <text evidence="1">Belongs to the class-III pyridoxal-phosphate-dependent aminotransferase family. HemL subfamily.</text>
</comment>
<reference key="1">
    <citation type="submission" date="2006-12" db="EMBL/GenBank/DDBJ databases">
        <title>Complete sequence of Halorhodospira halophila SL1.</title>
        <authorList>
            <consortium name="US DOE Joint Genome Institute"/>
            <person name="Copeland A."/>
            <person name="Lucas S."/>
            <person name="Lapidus A."/>
            <person name="Barry K."/>
            <person name="Detter J.C."/>
            <person name="Glavina del Rio T."/>
            <person name="Hammon N."/>
            <person name="Israni S."/>
            <person name="Dalin E."/>
            <person name="Tice H."/>
            <person name="Pitluck S."/>
            <person name="Saunders E."/>
            <person name="Brettin T."/>
            <person name="Bruce D."/>
            <person name="Han C."/>
            <person name="Tapia R."/>
            <person name="Schmutz J."/>
            <person name="Larimer F."/>
            <person name="Land M."/>
            <person name="Hauser L."/>
            <person name="Kyrpides N."/>
            <person name="Mikhailova N."/>
            <person name="Hoff W."/>
            <person name="Richardson P."/>
        </authorList>
    </citation>
    <scope>NUCLEOTIDE SEQUENCE [LARGE SCALE GENOMIC DNA]</scope>
    <source>
        <strain>DSM 244 / SL1</strain>
    </source>
</reference>
<evidence type="ECO:0000255" key="1">
    <source>
        <dbReference type="HAMAP-Rule" id="MF_00375"/>
    </source>
</evidence>
<accession>A1WYL3</accession>
<organism>
    <name type="scientific">Halorhodospira halophila (strain DSM 244 / SL1)</name>
    <name type="common">Ectothiorhodospira halophila (strain DSM 244 / SL1)</name>
    <dbReference type="NCBI Taxonomy" id="349124"/>
    <lineage>
        <taxon>Bacteria</taxon>
        <taxon>Pseudomonadati</taxon>
        <taxon>Pseudomonadota</taxon>
        <taxon>Gammaproteobacteria</taxon>
        <taxon>Chromatiales</taxon>
        <taxon>Ectothiorhodospiraceae</taxon>
        <taxon>Halorhodospira</taxon>
    </lineage>
</organism>
<name>GSA_HALHL</name>
<keyword id="KW-0963">Cytoplasm</keyword>
<keyword id="KW-0413">Isomerase</keyword>
<keyword id="KW-0627">Porphyrin biosynthesis</keyword>
<keyword id="KW-0663">Pyridoxal phosphate</keyword>
<keyword id="KW-1185">Reference proteome</keyword>
<proteinExistence type="inferred from homology"/>
<gene>
    <name evidence="1" type="primary">hemL</name>
    <name type="ordered locus">Hhal_2011</name>
</gene>
<sequence length="426" mass="45411">MQRTHQLFQQARELIPGGVNSPVRAFKGVGGEPIFFERGEGPYMWDVDGKRYVDYVCSWGPLVAGHADPEIVRRVQETAAKGLSFGTPVELEVEMARTLCQHVPSLEMVRLVNSGTEATMSALRLARGFTGRDKIVKFQGNYHGHVDALLAQAGSGALTLGVPGCPGVPEAVVAETLTVPYNDIEAVEQCFNEHGSEIAAVIVEPVAGNMNCVPPVPGFLEKLREVCDRTDALLIFDEVMTGFRVGPQCAQGRYGITPDLTCLGKVVGGGMPVGAFGGRREIMEGLAPTGGVYQAGTLSGNPVTMAAGLATLERITAPGAFEGLEQTTTRVVDGIKERADAAGIPLATNQAGSMFGLFFTDDAPVTRFEQVKACDLDAFNRFFHAMLDEGVYLAPAAFEAGFVSLAHDDNAVQETLDAAERAFARV</sequence>
<feature type="chain" id="PRO_0000300918" description="Glutamate-1-semialdehyde 2,1-aminomutase">
    <location>
        <begin position="1"/>
        <end position="426"/>
    </location>
</feature>
<feature type="modified residue" description="N6-(pyridoxal phosphate)lysine" evidence="1">
    <location>
        <position position="265"/>
    </location>
</feature>
<protein>
    <recommendedName>
        <fullName evidence="1">Glutamate-1-semialdehyde 2,1-aminomutase</fullName>
        <shortName evidence="1">GSA</shortName>
        <ecNumber evidence="1">5.4.3.8</ecNumber>
    </recommendedName>
    <alternativeName>
        <fullName evidence="1">Glutamate-1-semialdehyde aminotransferase</fullName>
        <shortName evidence="1">GSA-AT</shortName>
    </alternativeName>
</protein>